<gene>
    <name type="ORF">PtaqContig2130</name>
</gene>
<organism>
    <name type="scientific">Pteridium aquilinum subsp. aquilinum</name>
    <name type="common">Bracken fern</name>
    <dbReference type="NCBI Taxonomy" id="104588"/>
    <lineage>
        <taxon>Eukaryota</taxon>
        <taxon>Viridiplantae</taxon>
        <taxon>Streptophyta</taxon>
        <taxon>Embryophyta</taxon>
        <taxon>Tracheophyta</taxon>
        <taxon>Polypodiopsida</taxon>
        <taxon>Polypodiidae</taxon>
        <taxon>Polypodiales</taxon>
        <taxon>Dennstaedtiineae</taxon>
        <taxon>Dennstaedtiaceae</taxon>
        <taxon>Pteridium</taxon>
    </lineage>
</organism>
<name>CSPL1_PTEAA</name>
<proteinExistence type="inferred from homology"/>
<sequence>MDGSAHLRDPPGPAVLRWRLEDMHIIPGTSGSLALRICQFSAAIVSFSVMISAANFSSVTAFCFLVAAMVLQCMWSLSVATIEGYAMLVGRSLRDSPLLSLFAVGDWVTAVITFAGACASAGIAVLVGRDIHRGCDVNFCGRYAAAAGMAFLSWLLISTSFLFTFWLLATR</sequence>
<feature type="chain" id="PRO_0000417794" description="CASP-like protein 5A2">
    <location>
        <begin position="1"/>
        <end position="171"/>
    </location>
</feature>
<feature type="topological domain" description="Cytoplasmic" evidence="2">
    <location>
        <begin position="1"/>
        <end position="39"/>
    </location>
</feature>
<feature type="transmembrane region" description="Helical" evidence="2">
    <location>
        <begin position="40"/>
        <end position="60"/>
    </location>
</feature>
<feature type="topological domain" description="Extracellular" evidence="2">
    <location>
        <position position="61"/>
    </location>
</feature>
<feature type="transmembrane region" description="Helical" evidence="2">
    <location>
        <begin position="62"/>
        <end position="82"/>
    </location>
</feature>
<feature type="topological domain" description="Cytoplasmic" evidence="2">
    <location>
        <begin position="83"/>
        <end position="106"/>
    </location>
</feature>
<feature type="transmembrane region" description="Helical" evidence="2">
    <location>
        <begin position="107"/>
        <end position="127"/>
    </location>
</feature>
<feature type="topological domain" description="Extracellular" evidence="2">
    <location>
        <begin position="128"/>
        <end position="148"/>
    </location>
</feature>
<feature type="transmembrane region" description="Helical" evidence="2">
    <location>
        <begin position="149"/>
        <end position="169"/>
    </location>
</feature>
<feature type="topological domain" description="Cytoplasmic" evidence="2">
    <location>
        <begin position="170"/>
        <end position="171"/>
    </location>
</feature>
<evidence type="ECO:0000250" key="1"/>
<evidence type="ECO:0000255" key="2"/>
<evidence type="ECO:0000305" key="3"/>
<reference key="1">
    <citation type="journal article" date="2011" name="BMC Genomics">
        <title>De novo characterization of the gametophyte transcriptome in bracken fern, Pteridium aquilinum.</title>
        <authorList>
            <person name="Der J.P."/>
            <person name="Barker M.S."/>
            <person name="Wickett N.J."/>
            <person name="dePamphilis C.W."/>
            <person name="Wolf P.G."/>
        </authorList>
    </citation>
    <scope>NUCLEOTIDE SEQUENCE [LARGE SCALE MRNA]</scope>
    <source>
        <strain>Wolf 83</strain>
        <tissue>Gametophyte</tissue>
    </source>
</reference>
<reference key="2">
    <citation type="journal article" date="2014" name="Plant Physiol.">
        <title>Functional and evolutionary analysis of the CASPARIAN STRIP MEMBRANE DOMAIN PROTEIN family.</title>
        <authorList>
            <person name="Roppolo D."/>
            <person name="Boeckmann B."/>
            <person name="Pfister A."/>
            <person name="Boutet E."/>
            <person name="Rubio M.C."/>
            <person name="Denervaud-Tendon V."/>
            <person name="Vermeer J.E."/>
            <person name="Gheyselinck J."/>
            <person name="Xenarios I."/>
            <person name="Geldner N."/>
        </authorList>
    </citation>
    <scope>GENE FAMILY</scope>
    <scope>NOMENCLATURE</scope>
</reference>
<accession>P0DI22</accession>
<comment type="subunit">
    <text evidence="1">Homodimer and heterodimers.</text>
</comment>
<comment type="subcellular location">
    <subcellularLocation>
        <location evidence="1">Cell membrane</location>
        <topology evidence="1">Multi-pass membrane protein</topology>
    </subcellularLocation>
</comment>
<comment type="similarity">
    <text evidence="3">Belongs to the Casparian strip membrane proteins (CASP) family.</text>
</comment>
<dbReference type="GO" id="GO:0005886">
    <property type="term" value="C:plasma membrane"/>
    <property type="evidence" value="ECO:0007669"/>
    <property type="project" value="UniProtKB-SubCell"/>
</dbReference>
<dbReference type="InterPro" id="IPR006702">
    <property type="entry name" value="CASP_dom"/>
</dbReference>
<dbReference type="InterPro" id="IPR045009">
    <property type="entry name" value="CASPL-5"/>
</dbReference>
<dbReference type="PANTHER" id="PTHR32021:SF1">
    <property type="entry name" value="CASP-LIKE PROTEIN 5A1"/>
    <property type="match status" value="1"/>
</dbReference>
<dbReference type="PANTHER" id="PTHR32021">
    <property type="entry name" value="CASP-LIKE PROTEIN 5B3"/>
    <property type="match status" value="1"/>
</dbReference>
<dbReference type="Pfam" id="PF04535">
    <property type="entry name" value="CASP_dom"/>
    <property type="match status" value="1"/>
</dbReference>
<protein>
    <recommendedName>
        <fullName>CASP-like protein 5A2</fullName>
        <shortName>PaCASPL5A2</shortName>
    </recommendedName>
</protein>
<keyword id="KW-1003">Cell membrane</keyword>
<keyword id="KW-0472">Membrane</keyword>
<keyword id="KW-0812">Transmembrane</keyword>
<keyword id="KW-1133">Transmembrane helix</keyword>